<geneLocation type="chloroplast"/>
<name>PSBL_AMBTC</name>
<gene>
    <name evidence="1" type="primary">psbL</name>
</gene>
<organism>
    <name type="scientific">Amborella trichopoda</name>
    <dbReference type="NCBI Taxonomy" id="13333"/>
    <lineage>
        <taxon>Eukaryota</taxon>
        <taxon>Viridiplantae</taxon>
        <taxon>Streptophyta</taxon>
        <taxon>Embryophyta</taxon>
        <taxon>Tracheophyta</taxon>
        <taxon>Spermatophyta</taxon>
        <taxon>Magnoliopsida</taxon>
        <taxon>Amborellales</taxon>
        <taxon>Amborellaceae</taxon>
        <taxon>Amborella</taxon>
    </lineage>
</organism>
<keyword id="KW-0150">Chloroplast</keyword>
<keyword id="KW-0472">Membrane</keyword>
<keyword id="KW-0602">Photosynthesis</keyword>
<keyword id="KW-0604">Photosystem II</keyword>
<keyword id="KW-0934">Plastid</keyword>
<keyword id="KW-0674">Reaction center</keyword>
<keyword id="KW-1185">Reference proteome</keyword>
<keyword id="KW-0793">Thylakoid</keyword>
<keyword id="KW-0812">Transmembrane</keyword>
<keyword id="KW-1133">Transmembrane helix</keyword>
<sequence length="38" mass="4471">MTQSNPNEQNVELNRTSLYWGLLLIFVLAVSFSNYFFN</sequence>
<proteinExistence type="inferred from homology"/>
<comment type="function">
    <text evidence="1">One of the components of the core complex of photosystem II (PSII). PSII is a light-driven water:plastoquinone oxidoreductase that uses light energy to abstract electrons from H(2)O, generating O(2) and a proton gradient subsequently used for ATP formation. It consists of a core antenna complex that captures photons, and an electron transfer chain that converts photonic excitation into a charge separation. This subunit is found at the monomer-monomer interface and is required for correct PSII assembly and/or dimerization.</text>
</comment>
<comment type="subunit">
    <text evidence="1">PSII is composed of 1 copy each of membrane proteins PsbA, PsbB, PsbC, PsbD, PsbE, PsbF, PsbH, PsbI, PsbJ, PsbK, PsbL, PsbM, PsbT, PsbX, PsbY, PsbZ, Psb30/Ycf12, at least 3 peripheral proteins of the oxygen-evolving complex and a large number of cofactors. It forms dimeric complexes.</text>
</comment>
<comment type="subcellular location">
    <subcellularLocation>
        <location evidence="1">Plastid</location>
        <location evidence="1">Chloroplast thylakoid membrane</location>
        <topology evidence="1">Single-pass membrane protein</topology>
    </subcellularLocation>
</comment>
<comment type="similarity">
    <text evidence="1">Belongs to the PsbL family.</text>
</comment>
<evidence type="ECO:0000255" key="1">
    <source>
        <dbReference type="HAMAP-Rule" id="MF_01317"/>
    </source>
</evidence>
<accession>Q9GE29</accession>
<reference key="1">
    <citation type="journal article" date="2000" name="Am. J. Bot.">
        <title>Utility of 17 chloroplast genes for inferring the phylogeny of the basal angiosperms.</title>
        <authorList>
            <person name="Graham S.W."/>
            <person name="Olmstead R.G."/>
        </authorList>
    </citation>
    <scope>NUCLEOTIDE SEQUENCE [GENOMIC DNA]</scope>
</reference>
<reference key="2">
    <citation type="journal article" date="2003" name="Mol. Biol. Evol.">
        <title>Analysis of the Amborella trichopoda chloroplast genome sequence suggests that Amborella is not a basal angiosperm.</title>
        <authorList>
            <person name="Goremykin V.V."/>
            <person name="Hirsch-Ernst K.I."/>
            <person name="Wolfl S."/>
            <person name="Hellwig F.H."/>
        </authorList>
    </citation>
    <scope>NUCLEOTIDE SEQUENCE [LARGE SCALE GENOMIC DNA]</scope>
</reference>
<protein>
    <recommendedName>
        <fullName evidence="1">Photosystem II reaction center protein L</fullName>
        <shortName evidence="1">PSII-L</shortName>
    </recommendedName>
</protein>
<dbReference type="EMBL" id="AF235044">
    <property type="protein sequence ID" value="AAG44378.1"/>
    <property type="molecule type" value="Genomic_DNA"/>
</dbReference>
<dbReference type="EMBL" id="AJ506156">
    <property type="protein sequence ID" value="CAD47813.1"/>
    <property type="molecule type" value="Genomic_DNA"/>
</dbReference>
<dbReference type="RefSeq" id="NP_904114.1">
    <property type="nucleotide sequence ID" value="NC_005086.1"/>
</dbReference>
<dbReference type="SMR" id="Q9GE29"/>
<dbReference type="STRING" id="13333.Q9GE29"/>
<dbReference type="GeneID" id="2546571"/>
<dbReference type="KEGG" id="atr:2546571"/>
<dbReference type="OrthoDB" id="99at2759"/>
<dbReference type="Proteomes" id="UP000017836">
    <property type="component" value="Chloroplast"/>
</dbReference>
<dbReference type="GO" id="GO:0009535">
    <property type="term" value="C:chloroplast thylakoid membrane"/>
    <property type="evidence" value="ECO:0007669"/>
    <property type="project" value="UniProtKB-SubCell"/>
</dbReference>
<dbReference type="GO" id="GO:0009539">
    <property type="term" value="C:photosystem II reaction center"/>
    <property type="evidence" value="ECO:0007669"/>
    <property type="project" value="InterPro"/>
</dbReference>
<dbReference type="GO" id="GO:0015979">
    <property type="term" value="P:photosynthesis"/>
    <property type="evidence" value="ECO:0007669"/>
    <property type="project" value="UniProtKB-UniRule"/>
</dbReference>
<dbReference type="HAMAP" id="MF_01317">
    <property type="entry name" value="PSII_PsbL"/>
    <property type="match status" value="1"/>
</dbReference>
<dbReference type="InterPro" id="IPR003372">
    <property type="entry name" value="PSII_PsbL"/>
</dbReference>
<dbReference type="InterPro" id="IPR037266">
    <property type="entry name" value="PSII_PsbL_sf"/>
</dbReference>
<dbReference type="Pfam" id="PF02419">
    <property type="entry name" value="PsbL"/>
    <property type="match status" value="1"/>
</dbReference>
<dbReference type="SUPFAM" id="SSF161017">
    <property type="entry name" value="Photosystem II reaction center protein L, PsbL"/>
    <property type="match status" value="1"/>
</dbReference>
<feature type="chain" id="PRO_0000219675" description="Photosystem II reaction center protein L">
    <location>
        <begin position="1"/>
        <end position="38"/>
    </location>
</feature>
<feature type="transmembrane region" description="Helical" evidence="1">
    <location>
        <begin position="17"/>
        <end position="37"/>
    </location>
</feature>